<reference key="1">
    <citation type="journal article" date="1998" name="Plant J.">
        <title>Higher plants possess two structurally different poly(ADP-ribose) polymerases.</title>
        <authorList>
            <person name="Babiychuk E."/>
            <person name="Cottrill P.B."/>
            <person name="Storozhenko S."/>
            <person name="Fuangthong M."/>
            <person name="Chen Y."/>
            <person name="O'Farrell M.K."/>
            <person name="Van Montagu M."/>
            <person name="Inze D."/>
            <person name="Kushnir S."/>
        </authorList>
    </citation>
    <scope>NUCLEOTIDE SEQUENCE [MRNA]</scope>
</reference>
<sequence>MSARLRVADVRAELQRRGLDVSGTKPALVRRLDAAICEAEKAVVAAAPTSVANGYDVAVDGKRNCGNNKRKRSGDGGEEGNGDTCTDVTKLEGMSYRELQGLAKARGVAANGGKKDVIQRLLSATAGPAAVADGGPLGAKEVIKGGDEEVEVKKEKMVTATKKGAAVLDQHIPDHIKVNYHVLQVGDEIYDATLNQTNVGDNNNKFYIIQVLESDAGGSFMVYNRWGRVGVRGQDKLHGPSPTRDQAIYEFEGKFHNKTNNHWSDRKNFKCYAKKYTWLEMDYGETEKEIEKGSITDQIKETKLETRIAQFISLICNISMMKQRMVEIGYNAEKLPLGKLRKATILKGYHVLKRISDVISKADRRHLEQLTGEFYTVIPHDFGFRKMREFIIDTPQKLKAKLEMVEALGEIEIATKLLEDDSSDQDDPLYARYKQLHCDFTPLEADSDEYSMIKSYLRNTHGKTHSGYTVDIVQIFKVSRHGETERFQKFASTRNRMLLWHGSRLSNWAGILSQGLRIAPPEAPVTGYMFGKGVYFADMFSKSANYCYASEACRSGVLLLCEVALGDMNELLNADYDANNLPKGKLRSKGVGQTAPNMVESKVADDGVVVPLGEPKQEPSKRGGLLYNEYIVYNVDQIRMRYVLHVNFNFKRR</sequence>
<gene>
    <name type="primary">PARP2</name>
    <name type="synonym">PARP</name>
</gene>
<accession>O50017</accession>
<name>PARP2_MAIZE</name>
<protein>
    <recommendedName>
        <fullName>Poly [ADP-ribose] polymerase 2</fullName>
        <shortName>PARP-2</shortName>
        <ecNumber>2.4.2.30</ecNumber>
    </recommendedName>
    <alternativeName>
        <fullName>NAD(+) ADP-ribosyltransferase 2</fullName>
        <shortName>ADPRT-2</shortName>
    </alternativeName>
    <alternativeName>
        <fullName>Poly[ADP-ribose] synthase 2</fullName>
    </alternativeName>
    <alternativeName>
        <fullName evidence="1">Protein ADP-ribosyltransferase PARP2</fullName>
        <ecNumber evidence="1">2.4.2.-</ecNumber>
    </alternativeName>
</protein>
<comment type="function">
    <text evidence="1">Involved in the base excision repair (BER) pathway, by catalyzing the poly(ADP-ribosyl)ation of a limited number of acceptor proteins involved in chromatin architecture and in DNA metabolism. This modification follows DNA damages and appears as an obligatory step in a detection/signaling pathway leading to the reparation of DNA strand breaks (By similarity).</text>
</comment>
<comment type="catalytic activity">
    <reaction evidence="1">
        <text>NAD(+) + (ADP-D-ribosyl)n-acceptor = nicotinamide + (ADP-D-ribosyl)n+1-acceptor + H(+).</text>
        <dbReference type="EC" id="2.4.2.30"/>
    </reaction>
</comment>
<comment type="catalytic activity">
    <reaction evidence="1">
        <text>L-aspartyl-[protein] + NAD(+) = 4-O-(ADP-D-ribosyl)-L-aspartyl-[protein] + nicotinamide</text>
        <dbReference type="Rhea" id="RHEA:54424"/>
        <dbReference type="Rhea" id="RHEA-COMP:9867"/>
        <dbReference type="Rhea" id="RHEA-COMP:13832"/>
        <dbReference type="ChEBI" id="CHEBI:17154"/>
        <dbReference type="ChEBI" id="CHEBI:29961"/>
        <dbReference type="ChEBI" id="CHEBI:57540"/>
        <dbReference type="ChEBI" id="CHEBI:138102"/>
    </reaction>
</comment>
<comment type="catalytic activity">
    <reaction evidence="1">
        <text>L-glutamyl-[protein] + NAD(+) = 5-O-(ADP-D-ribosyl)-L-glutamyl-[protein] + nicotinamide</text>
        <dbReference type="Rhea" id="RHEA:58224"/>
        <dbReference type="Rhea" id="RHEA-COMP:10208"/>
        <dbReference type="Rhea" id="RHEA-COMP:15089"/>
        <dbReference type="ChEBI" id="CHEBI:17154"/>
        <dbReference type="ChEBI" id="CHEBI:29973"/>
        <dbReference type="ChEBI" id="CHEBI:57540"/>
        <dbReference type="ChEBI" id="CHEBI:142540"/>
    </reaction>
</comment>
<comment type="subcellular location">
    <subcellularLocation>
        <location evidence="8">Nucleus</location>
    </subcellularLocation>
</comment>
<comment type="similarity">
    <text evidence="8">Belongs to the ARTD/PARP family.</text>
</comment>
<dbReference type="EC" id="2.4.2.30"/>
<dbReference type="EC" id="2.4.2.-" evidence="1"/>
<dbReference type="EMBL" id="AJ222588">
    <property type="protein sequence ID" value="CAA10888.1"/>
    <property type="molecule type" value="mRNA"/>
</dbReference>
<dbReference type="PIR" id="T03656">
    <property type="entry name" value="T03656"/>
</dbReference>
<dbReference type="SMR" id="O50017"/>
<dbReference type="FunCoup" id="O50017">
    <property type="interactions" value="1914"/>
</dbReference>
<dbReference type="STRING" id="4577.O50017"/>
<dbReference type="PaxDb" id="4577-GRMZM2G099231_P01"/>
<dbReference type="MaizeGDB" id="403201"/>
<dbReference type="eggNOG" id="KOG1037">
    <property type="taxonomic scope" value="Eukaryota"/>
</dbReference>
<dbReference type="InParanoid" id="O50017"/>
<dbReference type="Proteomes" id="UP000007305">
    <property type="component" value="Unplaced"/>
</dbReference>
<dbReference type="ExpressionAtlas" id="O50017">
    <property type="expression patterns" value="baseline and differential"/>
</dbReference>
<dbReference type="GO" id="GO:0005730">
    <property type="term" value="C:nucleolus"/>
    <property type="evidence" value="ECO:0000318"/>
    <property type="project" value="GO_Central"/>
</dbReference>
<dbReference type="GO" id="GO:0003677">
    <property type="term" value="F:DNA binding"/>
    <property type="evidence" value="ECO:0007669"/>
    <property type="project" value="UniProtKB-KW"/>
</dbReference>
<dbReference type="GO" id="GO:0003950">
    <property type="term" value="F:NAD+ poly-ADP-ribosyltransferase activity"/>
    <property type="evidence" value="ECO:0000318"/>
    <property type="project" value="GO_Central"/>
</dbReference>
<dbReference type="GO" id="GO:0140806">
    <property type="term" value="F:NAD+-protein-aspartate ADP-ribosyltransferase activity"/>
    <property type="evidence" value="ECO:0007669"/>
    <property type="project" value="RHEA"/>
</dbReference>
<dbReference type="GO" id="GO:0140807">
    <property type="term" value="F:NAD+-protein-glutamate ADP-ribosyltransferase activity"/>
    <property type="evidence" value="ECO:0007669"/>
    <property type="project" value="RHEA"/>
</dbReference>
<dbReference type="GO" id="GO:0016779">
    <property type="term" value="F:nucleotidyltransferase activity"/>
    <property type="evidence" value="ECO:0007669"/>
    <property type="project" value="UniProtKB-KW"/>
</dbReference>
<dbReference type="GO" id="GO:0006302">
    <property type="term" value="P:double-strand break repair"/>
    <property type="evidence" value="ECO:0000318"/>
    <property type="project" value="GO_Central"/>
</dbReference>
<dbReference type="CDD" id="cd01437">
    <property type="entry name" value="parp_like"/>
    <property type="match status" value="1"/>
</dbReference>
<dbReference type="CDD" id="cd08002">
    <property type="entry name" value="WGR_PARP3_like"/>
    <property type="match status" value="1"/>
</dbReference>
<dbReference type="FunFam" id="1.10.720.30:FF:000023">
    <property type="entry name" value="Poly [ADP-ribose] polymerase"/>
    <property type="match status" value="1"/>
</dbReference>
<dbReference type="FunFam" id="1.20.142.10:FF:000005">
    <property type="entry name" value="Poly [ADP-ribose] polymerase"/>
    <property type="match status" value="1"/>
</dbReference>
<dbReference type="FunFam" id="2.20.140.10:FF:000001">
    <property type="entry name" value="Poly [ADP-ribose] polymerase"/>
    <property type="match status" value="1"/>
</dbReference>
<dbReference type="FunFam" id="3.90.228.10:FF:000002">
    <property type="entry name" value="Poly [ADP-ribose] polymerase"/>
    <property type="match status" value="1"/>
</dbReference>
<dbReference type="Gene3D" id="3.90.228.10">
    <property type="match status" value="1"/>
</dbReference>
<dbReference type="Gene3D" id="1.20.142.10">
    <property type="entry name" value="Poly(ADP-ribose) polymerase, regulatory domain"/>
    <property type="match status" value="1"/>
</dbReference>
<dbReference type="Gene3D" id="1.10.720.30">
    <property type="entry name" value="SAP domain"/>
    <property type="match status" value="1"/>
</dbReference>
<dbReference type="Gene3D" id="2.20.140.10">
    <property type="entry name" value="WGR domain"/>
    <property type="match status" value="1"/>
</dbReference>
<dbReference type="InterPro" id="IPR050800">
    <property type="entry name" value="ARTD/PARP"/>
</dbReference>
<dbReference type="InterPro" id="IPR012317">
    <property type="entry name" value="Poly(ADP-ribose)pol_cat_dom"/>
</dbReference>
<dbReference type="InterPro" id="IPR004102">
    <property type="entry name" value="Poly(ADP-ribose)pol_reg_dom"/>
</dbReference>
<dbReference type="InterPro" id="IPR036616">
    <property type="entry name" value="Poly(ADP-ribose)pol_reg_dom_sf"/>
</dbReference>
<dbReference type="InterPro" id="IPR003034">
    <property type="entry name" value="SAP_dom"/>
</dbReference>
<dbReference type="InterPro" id="IPR036361">
    <property type="entry name" value="SAP_dom_sf"/>
</dbReference>
<dbReference type="InterPro" id="IPR036930">
    <property type="entry name" value="WGR_dom_sf"/>
</dbReference>
<dbReference type="InterPro" id="IPR008893">
    <property type="entry name" value="WGR_domain"/>
</dbReference>
<dbReference type="PANTHER" id="PTHR10459">
    <property type="entry name" value="DNA LIGASE"/>
    <property type="match status" value="1"/>
</dbReference>
<dbReference type="PANTHER" id="PTHR10459:SF60">
    <property type="entry name" value="POLY [ADP-RIBOSE] POLYMERASE 2"/>
    <property type="match status" value="1"/>
</dbReference>
<dbReference type="Pfam" id="PF00644">
    <property type="entry name" value="PARP"/>
    <property type="match status" value="1"/>
</dbReference>
<dbReference type="Pfam" id="PF02877">
    <property type="entry name" value="PARP_reg"/>
    <property type="match status" value="1"/>
</dbReference>
<dbReference type="Pfam" id="PF02037">
    <property type="entry name" value="SAP"/>
    <property type="match status" value="1"/>
</dbReference>
<dbReference type="Pfam" id="PF05406">
    <property type="entry name" value="WGR"/>
    <property type="match status" value="1"/>
</dbReference>
<dbReference type="SMART" id="SM00513">
    <property type="entry name" value="SAP"/>
    <property type="match status" value="2"/>
</dbReference>
<dbReference type="SMART" id="SM00773">
    <property type="entry name" value="WGR"/>
    <property type="match status" value="1"/>
</dbReference>
<dbReference type="SUPFAM" id="SSF56399">
    <property type="entry name" value="ADP-ribosylation"/>
    <property type="match status" value="1"/>
</dbReference>
<dbReference type="SUPFAM" id="SSF47587">
    <property type="entry name" value="Domain of poly(ADP-ribose) polymerase"/>
    <property type="match status" value="1"/>
</dbReference>
<dbReference type="SUPFAM" id="SSF68906">
    <property type="entry name" value="SAP domain"/>
    <property type="match status" value="1"/>
</dbReference>
<dbReference type="SUPFAM" id="SSF142921">
    <property type="entry name" value="WGR domain-like"/>
    <property type="match status" value="1"/>
</dbReference>
<dbReference type="PROSITE" id="PS51060">
    <property type="entry name" value="PARP_ALPHA_HD"/>
    <property type="match status" value="1"/>
</dbReference>
<dbReference type="PROSITE" id="PS51059">
    <property type="entry name" value="PARP_CATALYTIC"/>
    <property type="match status" value="1"/>
</dbReference>
<dbReference type="PROSITE" id="PS50800">
    <property type="entry name" value="SAP"/>
    <property type="match status" value="2"/>
</dbReference>
<dbReference type="PROSITE" id="PS51977">
    <property type="entry name" value="WGR"/>
    <property type="match status" value="1"/>
</dbReference>
<proteinExistence type="evidence at transcript level"/>
<keyword id="KW-0013">ADP-ribosylation</keyword>
<keyword id="KW-0238">DNA-binding</keyword>
<keyword id="KW-0328">Glycosyltransferase</keyword>
<keyword id="KW-0520">NAD</keyword>
<keyword id="KW-0548">Nucleotidyltransferase</keyword>
<keyword id="KW-0539">Nucleus</keyword>
<keyword id="KW-1185">Reference proteome</keyword>
<keyword id="KW-0677">Repeat</keyword>
<keyword id="KW-0808">Transferase</keyword>
<organism>
    <name type="scientific">Zea mays</name>
    <name type="common">Maize</name>
    <dbReference type="NCBI Taxonomy" id="4577"/>
    <lineage>
        <taxon>Eukaryota</taxon>
        <taxon>Viridiplantae</taxon>
        <taxon>Streptophyta</taxon>
        <taxon>Embryophyta</taxon>
        <taxon>Tracheophyta</taxon>
        <taxon>Spermatophyta</taxon>
        <taxon>Magnoliopsida</taxon>
        <taxon>Liliopsida</taxon>
        <taxon>Poales</taxon>
        <taxon>Poaceae</taxon>
        <taxon>PACMAD clade</taxon>
        <taxon>Panicoideae</taxon>
        <taxon>Andropogonodae</taxon>
        <taxon>Andropogoneae</taxon>
        <taxon>Tripsacinae</taxon>
        <taxon>Zea</taxon>
    </lineage>
</organism>
<feature type="chain" id="PRO_0000260499" description="Poly [ADP-ribose] polymerase 2">
    <location>
        <begin position="1"/>
        <end position="653"/>
    </location>
</feature>
<feature type="domain" description="SAP 1" evidence="3">
    <location>
        <begin position="2"/>
        <end position="36"/>
    </location>
</feature>
<feature type="domain" description="SAP 2" evidence="3">
    <location>
        <begin position="91"/>
        <end position="125"/>
    </location>
</feature>
<feature type="domain" description="WGR" evidence="6">
    <location>
        <begin position="179"/>
        <end position="276"/>
    </location>
</feature>
<feature type="domain" description="PARP alpha-helical" evidence="5">
    <location>
        <begin position="301"/>
        <end position="419"/>
    </location>
</feature>
<feature type="domain" description="PARP catalytic" evidence="4">
    <location>
        <begin position="427"/>
        <end position="653"/>
    </location>
</feature>
<feature type="region of interest" description="Disordered" evidence="7">
    <location>
        <begin position="64"/>
        <end position="84"/>
    </location>
</feature>
<feature type="short sequence motif" description="Nuclear localization signal" evidence="2">
    <location>
        <begin position="69"/>
        <end position="72"/>
    </location>
</feature>
<evidence type="ECO:0000250" key="1">
    <source>
        <dbReference type="UniProtKB" id="P09874"/>
    </source>
</evidence>
<evidence type="ECO:0000255" key="2"/>
<evidence type="ECO:0000255" key="3">
    <source>
        <dbReference type="PROSITE-ProRule" id="PRU00186"/>
    </source>
</evidence>
<evidence type="ECO:0000255" key="4">
    <source>
        <dbReference type="PROSITE-ProRule" id="PRU00397"/>
    </source>
</evidence>
<evidence type="ECO:0000255" key="5">
    <source>
        <dbReference type="PROSITE-ProRule" id="PRU00398"/>
    </source>
</evidence>
<evidence type="ECO:0000255" key="6">
    <source>
        <dbReference type="PROSITE-ProRule" id="PRU01321"/>
    </source>
</evidence>
<evidence type="ECO:0000256" key="7">
    <source>
        <dbReference type="SAM" id="MobiDB-lite"/>
    </source>
</evidence>
<evidence type="ECO:0000305" key="8"/>